<gene>
    <name type="primary">yiiE</name>
    <name type="ordered locus">Z5431</name>
    <name type="ordered locus">ECs4815</name>
</gene>
<comment type="similarity">
    <text evidence="2">Belongs to the YiiE family.</text>
</comment>
<comment type="sequence caution" evidence="2">
    <conflict type="erroneous initiation">
        <sequence resource="EMBL-CDS" id="AAG59082"/>
    </conflict>
    <text>Extended N-terminus.</text>
</comment>
<proteinExistence type="inferred from homology"/>
<keyword id="KW-1185">Reference proteome</keyword>
<evidence type="ECO:0000256" key="1">
    <source>
        <dbReference type="SAM" id="MobiDB-lite"/>
    </source>
</evidence>
<evidence type="ECO:0000305" key="2"/>
<dbReference type="EMBL" id="AE005174">
    <property type="protein sequence ID" value="AAG59082.1"/>
    <property type="status" value="ALT_INIT"/>
    <property type="molecule type" value="Genomic_DNA"/>
</dbReference>
<dbReference type="EMBL" id="BA000007">
    <property type="protein sequence ID" value="BAB38238.2"/>
    <property type="molecule type" value="Genomic_DNA"/>
</dbReference>
<dbReference type="PIR" id="F86077">
    <property type="entry name" value="F86077"/>
</dbReference>
<dbReference type="PIR" id="G91230">
    <property type="entry name" value="G91230"/>
</dbReference>
<dbReference type="RefSeq" id="NP_312842.2">
    <property type="nucleotide sequence ID" value="NC_002695.1"/>
</dbReference>
<dbReference type="RefSeq" id="WP_001295676.1">
    <property type="nucleotide sequence ID" value="NZ_VOAI01000016.1"/>
</dbReference>
<dbReference type="SMR" id="Q8X8C1"/>
<dbReference type="STRING" id="155864.Z5431"/>
<dbReference type="GeneID" id="915084"/>
<dbReference type="KEGG" id="ece:Z5431"/>
<dbReference type="KEGG" id="ecs:ECs_4815"/>
<dbReference type="PATRIC" id="fig|386585.9.peg.5030"/>
<dbReference type="eggNOG" id="COG3905">
    <property type="taxonomic scope" value="Bacteria"/>
</dbReference>
<dbReference type="HOGENOM" id="CLU_182089_1_0_6"/>
<dbReference type="OMA" id="MNSICKV"/>
<dbReference type="Proteomes" id="UP000000558">
    <property type="component" value="Chromosome"/>
</dbReference>
<dbReference type="Proteomes" id="UP000002519">
    <property type="component" value="Chromosome"/>
</dbReference>
<dbReference type="GO" id="GO:0043565">
    <property type="term" value="F:sequence-specific DNA binding"/>
    <property type="evidence" value="ECO:0007669"/>
    <property type="project" value="UniProtKB-ARBA"/>
</dbReference>
<dbReference type="GO" id="GO:0006355">
    <property type="term" value="P:regulation of DNA-templated transcription"/>
    <property type="evidence" value="ECO:0007669"/>
    <property type="project" value="InterPro"/>
</dbReference>
<dbReference type="CDD" id="cd21631">
    <property type="entry name" value="RHH_CopG_NikR-like"/>
    <property type="match status" value="1"/>
</dbReference>
<dbReference type="Gene3D" id="1.10.1220.10">
    <property type="entry name" value="Met repressor-like"/>
    <property type="match status" value="1"/>
</dbReference>
<dbReference type="InterPro" id="IPR013321">
    <property type="entry name" value="Arc_rbn_hlx_hlx"/>
</dbReference>
<dbReference type="InterPro" id="IPR002145">
    <property type="entry name" value="CopG"/>
</dbReference>
<dbReference type="Pfam" id="PF01402">
    <property type="entry name" value="RHH_1"/>
    <property type="match status" value="1"/>
</dbReference>
<feature type="chain" id="PRO_0000293686" description="Uncharacterized protein YiiE">
    <location>
        <begin position="1"/>
        <end position="72"/>
    </location>
</feature>
<feature type="region of interest" description="Disordered" evidence="1">
    <location>
        <begin position="51"/>
        <end position="72"/>
    </location>
</feature>
<organism>
    <name type="scientific">Escherichia coli O157:H7</name>
    <dbReference type="NCBI Taxonomy" id="83334"/>
    <lineage>
        <taxon>Bacteria</taxon>
        <taxon>Pseudomonadati</taxon>
        <taxon>Pseudomonadota</taxon>
        <taxon>Gammaproteobacteria</taxon>
        <taxon>Enterobacterales</taxon>
        <taxon>Enterobacteriaceae</taxon>
        <taxon>Escherichia</taxon>
    </lineage>
</organism>
<sequence>MAMNTVFLHLSEEAIKRLNKLRGWRKVSRSAILREAVEQYLERQQFPVRKAKGGRQKGEVVGVDDQCKEHKE</sequence>
<name>YIIE_ECO57</name>
<reference key="1">
    <citation type="journal article" date="2001" name="Nature">
        <title>Genome sequence of enterohaemorrhagic Escherichia coli O157:H7.</title>
        <authorList>
            <person name="Perna N.T."/>
            <person name="Plunkett G. III"/>
            <person name="Burland V."/>
            <person name="Mau B."/>
            <person name="Glasner J.D."/>
            <person name="Rose D.J."/>
            <person name="Mayhew G.F."/>
            <person name="Evans P.S."/>
            <person name="Gregor J."/>
            <person name="Kirkpatrick H.A."/>
            <person name="Posfai G."/>
            <person name="Hackett J."/>
            <person name="Klink S."/>
            <person name="Boutin A."/>
            <person name="Shao Y."/>
            <person name="Miller L."/>
            <person name="Grotbeck E.J."/>
            <person name="Davis N.W."/>
            <person name="Lim A."/>
            <person name="Dimalanta E.T."/>
            <person name="Potamousis K."/>
            <person name="Apodaca J."/>
            <person name="Anantharaman T.S."/>
            <person name="Lin J."/>
            <person name="Yen G."/>
            <person name="Schwartz D.C."/>
            <person name="Welch R.A."/>
            <person name="Blattner F.R."/>
        </authorList>
    </citation>
    <scope>NUCLEOTIDE SEQUENCE [LARGE SCALE GENOMIC DNA]</scope>
    <source>
        <strain>O157:H7 / EDL933 / ATCC 700927 / EHEC</strain>
    </source>
</reference>
<reference key="2">
    <citation type="journal article" date="2001" name="DNA Res.">
        <title>Complete genome sequence of enterohemorrhagic Escherichia coli O157:H7 and genomic comparison with a laboratory strain K-12.</title>
        <authorList>
            <person name="Hayashi T."/>
            <person name="Makino K."/>
            <person name="Ohnishi M."/>
            <person name="Kurokawa K."/>
            <person name="Ishii K."/>
            <person name="Yokoyama K."/>
            <person name="Han C.-G."/>
            <person name="Ohtsubo E."/>
            <person name="Nakayama K."/>
            <person name="Murata T."/>
            <person name="Tanaka M."/>
            <person name="Tobe T."/>
            <person name="Iida T."/>
            <person name="Takami H."/>
            <person name="Honda T."/>
            <person name="Sasakawa C."/>
            <person name="Ogasawara N."/>
            <person name="Yasunaga T."/>
            <person name="Kuhara S."/>
            <person name="Shiba T."/>
            <person name="Hattori M."/>
            <person name="Shinagawa H."/>
        </authorList>
    </citation>
    <scope>NUCLEOTIDE SEQUENCE [LARGE SCALE GENOMIC DNA]</scope>
    <source>
        <strain>O157:H7 / Sakai / RIMD 0509952 / EHEC</strain>
    </source>
</reference>
<accession>Q8X8C1</accession>
<accession>Q7A9A9</accession>
<protein>
    <recommendedName>
        <fullName>Uncharacterized protein YiiE</fullName>
    </recommendedName>
</protein>